<organism>
    <name type="scientific">Danio rerio</name>
    <name type="common">Zebrafish</name>
    <name type="synonym">Brachydanio rerio</name>
    <dbReference type="NCBI Taxonomy" id="7955"/>
    <lineage>
        <taxon>Eukaryota</taxon>
        <taxon>Metazoa</taxon>
        <taxon>Chordata</taxon>
        <taxon>Craniata</taxon>
        <taxon>Vertebrata</taxon>
        <taxon>Euteleostomi</taxon>
        <taxon>Actinopterygii</taxon>
        <taxon>Neopterygii</taxon>
        <taxon>Teleostei</taxon>
        <taxon>Ostariophysi</taxon>
        <taxon>Cypriniformes</taxon>
        <taxon>Danionidae</taxon>
        <taxon>Danioninae</taxon>
        <taxon>Danio</taxon>
    </lineage>
</organism>
<reference key="1">
    <citation type="submission" date="2004-01" db="EMBL/GenBank/DDBJ databases">
        <authorList>
            <consortium name="NIH - Zebrafish Gene Collection (ZGC) project"/>
        </authorList>
    </citation>
    <scope>NUCLEOTIDE SEQUENCE [LARGE SCALE MRNA]</scope>
</reference>
<keyword id="KW-0119">Carbohydrate metabolism</keyword>
<keyword id="KW-0378">Hydrolase</keyword>
<keyword id="KW-0479">Metal-binding</keyword>
<keyword id="KW-1185">Reference proteome</keyword>
<gene>
    <name type="primary">amdhd2</name>
    <name type="ORF">zgc:77775</name>
</gene>
<sequence>MPSNKSVSDAPITQFVNCRILKNHKLQWEDLWVREGKILNPEKLFFDEQGFADHRVDCENKIIAPGFIDVQLNGGYGIDFSQASSDIRGGVALVAKKILEHGVTSFCPTLVTSPPHIYHKVIPELRVQDGGPEGAGVLGIHLEGPFISEEKRGAHPPKFLRTFQSGGVADLMETYGQLENVAMVTLAPELTNSAAAIHELSSRGITVSVGHSMADLSQAEEAVQNGATFITHLFNAMLPFHHRDPGIVGLLTSDRIPPGRTVYYGMIADGIHTHPAALRIAHRAHPAGLVLVTDAVTAMGLPPGRHTLGQQQIDIQGLHAYVAGTTTLSGSIATMDMCVRHFREASGCTVEAALEAASLHPAQLLGISHRKGTLEFGADADFIVLDDMLTVRETYIAGQQVWRK</sequence>
<accession>Q6P0U0</accession>
<dbReference type="EC" id="3.5.1.25" evidence="2"/>
<dbReference type="EMBL" id="BC065449">
    <property type="protein sequence ID" value="AAH65449.1"/>
    <property type="molecule type" value="mRNA"/>
</dbReference>
<dbReference type="RefSeq" id="NP_991244.1">
    <property type="nucleotide sequence ID" value="NM_205681.1"/>
</dbReference>
<dbReference type="RefSeq" id="XP_005163800.1">
    <property type="nucleotide sequence ID" value="XM_005163743.5"/>
</dbReference>
<dbReference type="RefSeq" id="XP_005163801.1">
    <property type="nucleotide sequence ID" value="XM_005163744.3"/>
</dbReference>
<dbReference type="RefSeq" id="XP_068072395.1">
    <property type="nucleotide sequence ID" value="XM_068216294.1"/>
</dbReference>
<dbReference type="SMR" id="Q6P0U0"/>
<dbReference type="FunCoup" id="Q6P0U0">
    <property type="interactions" value="306"/>
</dbReference>
<dbReference type="STRING" id="7955.ENSDARP00000133871"/>
<dbReference type="PaxDb" id="7955-ENSDARP00000011842"/>
<dbReference type="Ensembl" id="ENSDART00000159647">
    <property type="protein sequence ID" value="ENSDARP00000133871"/>
    <property type="gene ID" value="ENSDARG00000100376"/>
</dbReference>
<dbReference type="GeneID" id="402981"/>
<dbReference type="KEGG" id="dre:402981"/>
<dbReference type="AGR" id="ZFIN:ZDB-GENE-040426-1871"/>
<dbReference type="CTD" id="51005"/>
<dbReference type="ZFIN" id="ZDB-GENE-040426-1871">
    <property type="gene designation" value="amdhd2"/>
</dbReference>
<dbReference type="eggNOG" id="KOG3892">
    <property type="taxonomic scope" value="Eukaryota"/>
</dbReference>
<dbReference type="HOGENOM" id="CLU_032482_0_2_1"/>
<dbReference type="InParanoid" id="Q6P0U0"/>
<dbReference type="OMA" id="PCRKGAH"/>
<dbReference type="OrthoDB" id="10264777at2759"/>
<dbReference type="PhylomeDB" id="Q6P0U0"/>
<dbReference type="TreeFam" id="TF315036"/>
<dbReference type="Reactome" id="R-DRE-446210">
    <property type="pathway name" value="Synthesis of UDP-N-acetyl-glucosamine"/>
</dbReference>
<dbReference type="UniPathway" id="UPA00629"/>
<dbReference type="PRO" id="PR:Q6P0U0"/>
<dbReference type="Proteomes" id="UP000000437">
    <property type="component" value="Chromosome 3"/>
</dbReference>
<dbReference type="Bgee" id="ENSDARG00000100376">
    <property type="expression patterns" value="Expressed in intestine and 34 other cell types or tissues"/>
</dbReference>
<dbReference type="GO" id="GO:0046872">
    <property type="term" value="F:metal ion binding"/>
    <property type="evidence" value="ECO:0007669"/>
    <property type="project" value="UniProtKB-KW"/>
</dbReference>
<dbReference type="GO" id="GO:0008448">
    <property type="term" value="F:N-acetylglucosamine-6-phosphate deacetylase activity"/>
    <property type="evidence" value="ECO:0000250"/>
    <property type="project" value="UniProtKB"/>
</dbReference>
<dbReference type="GO" id="GO:0006046">
    <property type="term" value="P:N-acetylglucosamine catabolic process"/>
    <property type="evidence" value="ECO:0000318"/>
    <property type="project" value="GO_Central"/>
</dbReference>
<dbReference type="GO" id="GO:0019262">
    <property type="term" value="P:N-acetylneuraminate catabolic process"/>
    <property type="evidence" value="ECO:0007669"/>
    <property type="project" value="UniProtKB-UniPathway"/>
</dbReference>
<dbReference type="CDD" id="cd00854">
    <property type="entry name" value="NagA"/>
    <property type="match status" value="1"/>
</dbReference>
<dbReference type="FunFam" id="3.20.20.140:FF:000023">
    <property type="entry name" value="N-acetylglucosamine-6-phosphate deacetylase"/>
    <property type="match status" value="1"/>
</dbReference>
<dbReference type="Gene3D" id="3.20.20.140">
    <property type="entry name" value="Metal-dependent hydrolases"/>
    <property type="match status" value="1"/>
</dbReference>
<dbReference type="Gene3D" id="2.30.40.10">
    <property type="entry name" value="Urease, subunit C, domain 1"/>
    <property type="match status" value="1"/>
</dbReference>
<dbReference type="InterPro" id="IPR006680">
    <property type="entry name" value="Amidohydro-rel"/>
</dbReference>
<dbReference type="InterPro" id="IPR003764">
    <property type="entry name" value="GlcNAc_6-P_deAcase"/>
</dbReference>
<dbReference type="InterPro" id="IPR011059">
    <property type="entry name" value="Metal-dep_hydrolase_composite"/>
</dbReference>
<dbReference type="InterPro" id="IPR032466">
    <property type="entry name" value="Metal_Hydrolase"/>
</dbReference>
<dbReference type="NCBIfam" id="TIGR00221">
    <property type="entry name" value="nagA"/>
    <property type="match status" value="1"/>
</dbReference>
<dbReference type="PANTHER" id="PTHR11113">
    <property type="entry name" value="N-ACETYLGLUCOSAMINE-6-PHOSPHATE DEACETYLASE"/>
    <property type="match status" value="1"/>
</dbReference>
<dbReference type="PANTHER" id="PTHR11113:SF14">
    <property type="entry name" value="N-ACETYLGLUCOSAMINE-6-PHOSPHATE DEACETYLASE"/>
    <property type="match status" value="1"/>
</dbReference>
<dbReference type="Pfam" id="PF01979">
    <property type="entry name" value="Amidohydro_1"/>
    <property type="match status" value="1"/>
</dbReference>
<dbReference type="PIRSF" id="PIRSF038994">
    <property type="entry name" value="NagA"/>
    <property type="match status" value="1"/>
</dbReference>
<dbReference type="SUPFAM" id="SSF51338">
    <property type="entry name" value="Composite domain of metallo-dependent hydrolases"/>
    <property type="match status" value="1"/>
</dbReference>
<dbReference type="SUPFAM" id="SSF51556">
    <property type="entry name" value="Metallo-dependent hydrolases"/>
    <property type="match status" value="1"/>
</dbReference>
<comment type="function">
    <text evidence="2">Hydrolyzes the N-glycolyl group from N-glycolylglucosamine 6-phosphate (GlcNGc-6-P) in the N-glycolylneuraminic acid (Neu5Gc) degradation pathway.</text>
</comment>
<comment type="catalytic activity">
    <reaction evidence="2">
        <text>N-acetyl-D-glucosamine 6-phosphate + H2O = D-glucosamine 6-phosphate + acetate</text>
        <dbReference type="Rhea" id="RHEA:22936"/>
        <dbReference type="ChEBI" id="CHEBI:15377"/>
        <dbReference type="ChEBI" id="CHEBI:30089"/>
        <dbReference type="ChEBI" id="CHEBI:57513"/>
        <dbReference type="ChEBI" id="CHEBI:58725"/>
        <dbReference type="EC" id="3.5.1.25"/>
    </reaction>
</comment>
<comment type="cofactor">
    <cofactor evidence="1">
        <name>a divalent metal cation</name>
        <dbReference type="ChEBI" id="CHEBI:60240"/>
    </cofactor>
    <text evidence="1">Binds 1 divalent metal cation per subunit.</text>
</comment>
<comment type="pathway">
    <text evidence="2">Amino-sugar metabolism; N-acetylneuraminate degradation.</text>
</comment>
<comment type="similarity">
    <text evidence="3">Belongs to the metallo-dependent hydrolases superfamily. NagA family.</text>
</comment>
<protein>
    <recommendedName>
        <fullName evidence="2">N-acetylglucosamine-6-phosphate deacetylase</fullName>
        <shortName evidence="2">GlcNAc 6-P deacetylase</shortName>
        <ecNumber evidence="2">3.5.1.25</ecNumber>
    </recommendedName>
    <alternativeName>
        <fullName evidence="2">Amidohydrolase domain-containing protein 2</fullName>
    </alternativeName>
</protein>
<evidence type="ECO:0000250" key="1">
    <source>
        <dbReference type="UniProtKB" id="P0AF18"/>
    </source>
</evidence>
<evidence type="ECO:0000250" key="2">
    <source>
        <dbReference type="UniProtKB" id="Q9Y303"/>
    </source>
</evidence>
<evidence type="ECO:0000305" key="3"/>
<name>NAGA_DANRE</name>
<proteinExistence type="evidence at transcript level"/>
<feature type="chain" id="PRO_0000315779" description="N-acetylglucosamine-6-phosphate deacetylase">
    <location>
        <begin position="1"/>
        <end position="404"/>
    </location>
</feature>
<feature type="active site" description="Proton donor/acceptor" evidence="1">
    <location>
        <position position="294"/>
    </location>
</feature>
<feature type="binding site" evidence="1">
    <location>
        <position position="143"/>
    </location>
    <ligand>
        <name>a divalent metal cation</name>
        <dbReference type="ChEBI" id="CHEBI:60240"/>
    </ligand>
</feature>
<feature type="binding site" evidence="1">
    <location>
        <begin position="154"/>
        <end position="155"/>
    </location>
    <ligand>
        <name>substrate</name>
    </ligand>
</feature>
<feature type="binding site" evidence="1">
    <location>
        <position position="211"/>
    </location>
    <ligand>
        <name>a divalent metal cation</name>
        <dbReference type="ChEBI" id="CHEBI:60240"/>
    </ligand>
</feature>
<feature type="binding site" evidence="1">
    <location>
        <position position="232"/>
    </location>
    <ligand>
        <name>a divalent metal cation</name>
        <dbReference type="ChEBI" id="CHEBI:60240"/>
    </ligand>
</feature>
<feature type="binding site" evidence="1">
    <location>
        <begin position="235"/>
        <end position="236"/>
    </location>
    <ligand>
        <name>substrate</name>
    </ligand>
</feature>
<feature type="binding site" evidence="1">
    <location>
        <position position="243"/>
    </location>
    <ligand>
        <name>substrate</name>
    </ligand>
</feature>
<feature type="binding site" evidence="1">
    <location>
        <begin position="269"/>
        <end position="272"/>
    </location>
    <ligand>
        <name>substrate</name>
    </ligand>
</feature>
<feature type="binding site" evidence="1">
    <location>
        <begin position="328"/>
        <end position="330"/>
    </location>
    <ligand>
        <name>substrate</name>
    </ligand>
</feature>